<feature type="chain" id="PRO_1000071638" description="Serine--tRNA ligase">
    <location>
        <begin position="1"/>
        <end position="428"/>
    </location>
</feature>
<feature type="binding site" evidence="1">
    <location>
        <begin position="236"/>
        <end position="238"/>
    </location>
    <ligand>
        <name>L-serine</name>
        <dbReference type="ChEBI" id="CHEBI:33384"/>
    </ligand>
</feature>
<feature type="binding site" evidence="1">
    <location>
        <begin position="267"/>
        <end position="269"/>
    </location>
    <ligand>
        <name>ATP</name>
        <dbReference type="ChEBI" id="CHEBI:30616"/>
    </ligand>
</feature>
<feature type="binding site" evidence="1">
    <location>
        <position position="290"/>
    </location>
    <ligand>
        <name>L-serine</name>
        <dbReference type="ChEBI" id="CHEBI:33384"/>
    </ligand>
</feature>
<feature type="binding site" evidence="1">
    <location>
        <begin position="354"/>
        <end position="357"/>
    </location>
    <ligand>
        <name>ATP</name>
        <dbReference type="ChEBI" id="CHEBI:30616"/>
    </ligand>
</feature>
<feature type="binding site" evidence="1">
    <location>
        <position position="388"/>
    </location>
    <ligand>
        <name>L-serine</name>
        <dbReference type="ChEBI" id="CHEBI:33384"/>
    </ligand>
</feature>
<reference key="1">
    <citation type="submission" date="2007-05" db="EMBL/GenBank/DDBJ databases">
        <title>Complete sequence of chromosome of Psychrobacter sp. PRwf-1.</title>
        <authorList>
            <consortium name="US DOE Joint Genome Institute"/>
            <person name="Copeland A."/>
            <person name="Lucas S."/>
            <person name="Lapidus A."/>
            <person name="Barry K."/>
            <person name="Detter J.C."/>
            <person name="Glavina del Rio T."/>
            <person name="Hammon N."/>
            <person name="Israni S."/>
            <person name="Dalin E."/>
            <person name="Tice H."/>
            <person name="Pitluck S."/>
            <person name="Chain P."/>
            <person name="Malfatti S."/>
            <person name="Shin M."/>
            <person name="Vergez L."/>
            <person name="Schmutz J."/>
            <person name="Larimer F."/>
            <person name="Land M."/>
            <person name="Hauser L."/>
            <person name="Kyrpides N."/>
            <person name="Kim E."/>
            <person name="Tiedje J."/>
            <person name="Richardson P."/>
        </authorList>
    </citation>
    <scope>NUCLEOTIDE SEQUENCE [LARGE SCALE GENOMIC DNA]</scope>
    <source>
        <strain>PRwf-1</strain>
    </source>
</reference>
<sequence>MIDPKLLRQDLTELKQKLAKRGYELDVDFWQQMESQRKSLQVITEDLQAKRNAGAKQVGVLKKNGEDATELLAEMQNISSEMKQAEESLKALQDKINQAALQIPNIPADDVPEGSSEEDNVEVRKWGTPRQFDFKVQEHSDLGEVLGQLDFAAAAKLTGSRFSVLKGQLAQLHRALIQFMLNTHTVKYGYTECYVPYIVNSDSLEGTGQLPKFEEDLFKLTNHTNNEAMGFYLIPTAEVPMTNLVRGERLDASELPLKFTAHTPCFRSEAGSHGRDTRGLIRQHQFEKVEMVNIATAAQSDELLEQMTGQAEYILQQLQLPYRVVKLCTGDMGFSALRTYDIEVWVPSQDTYREISSCSNCGDFQARRMGTRVKEGKKTELVHTLNGSGLAVGRTLLAIMENHQNADGSITIPEVLRPYMGGAEIISA</sequence>
<accession>A5WFN9</accession>
<keyword id="KW-0030">Aminoacyl-tRNA synthetase</keyword>
<keyword id="KW-0067">ATP-binding</keyword>
<keyword id="KW-0963">Cytoplasm</keyword>
<keyword id="KW-0436">Ligase</keyword>
<keyword id="KW-0547">Nucleotide-binding</keyword>
<keyword id="KW-0648">Protein biosynthesis</keyword>
<dbReference type="EC" id="6.1.1.11" evidence="1"/>
<dbReference type="EMBL" id="CP000713">
    <property type="protein sequence ID" value="ABQ94480.1"/>
    <property type="molecule type" value="Genomic_DNA"/>
</dbReference>
<dbReference type="SMR" id="A5WFN9"/>
<dbReference type="STRING" id="349106.PsycPRwf_1539"/>
<dbReference type="KEGG" id="prw:PsycPRwf_1539"/>
<dbReference type="eggNOG" id="COG0172">
    <property type="taxonomic scope" value="Bacteria"/>
</dbReference>
<dbReference type="HOGENOM" id="CLU_023797_0_1_6"/>
<dbReference type="UniPathway" id="UPA00906">
    <property type="reaction ID" value="UER00895"/>
</dbReference>
<dbReference type="GO" id="GO:0005737">
    <property type="term" value="C:cytoplasm"/>
    <property type="evidence" value="ECO:0007669"/>
    <property type="project" value="UniProtKB-SubCell"/>
</dbReference>
<dbReference type="GO" id="GO:0005524">
    <property type="term" value="F:ATP binding"/>
    <property type="evidence" value="ECO:0007669"/>
    <property type="project" value="UniProtKB-UniRule"/>
</dbReference>
<dbReference type="GO" id="GO:0004828">
    <property type="term" value="F:serine-tRNA ligase activity"/>
    <property type="evidence" value="ECO:0007669"/>
    <property type="project" value="UniProtKB-UniRule"/>
</dbReference>
<dbReference type="GO" id="GO:0016260">
    <property type="term" value="P:selenocysteine biosynthetic process"/>
    <property type="evidence" value="ECO:0007669"/>
    <property type="project" value="UniProtKB-UniRule"/>
</dbReference>
<dbReference type="GO" id="GO:0006434">
    <property type="term" value="P:seryl-tRNA aminoacylation"/>
    <property type="evidence" value="ECO:0007669"/>
    <property type="project" value="UniProtKB-UniRule"/>
</dbReference>
<dbReference type="CDD" id="cd00770">
    <property type="entry name" value="SerRS_core"/>
    <property type="match status" value="1"/>
</dbReference>
<dbReference type="Gene3D" id="3.30.930.10">
    <property type="entry name" value="Bira Bifunctional Protein, Domain 2"/>
    <property type="match status" value="1"/>
</dbReference>
<dbReference type="Gene3D" id="1.10.287.40">
    <property type="entry name" value="Serine-tRNA synthetase, tRNA binding domain"/>
    <property type="match status" value="1"/>
</dbReference>
<dbReference type="HAMAP" id="MF_00176">
    <property type="entry name" value="Ser_tRNA_synth_type1"/>
    <property type="match status" value="1"/>
</dbReference>
<dbReference type="InterPro" id="IPR002314">
    <property type="entry name" value="aa-tRNA-synt_IIb"/>
</dbReference>
<dbReference type="InterPro" id="IPR006195">
    <property type="entry name" value="aa-tRNA-synth_II"/>
</dbReference>
<dbReference type="InterPro" id="IPR045864">
    <property type="entry name" value="aa-tRNA-synth_II/BPL/LPL"/>
</dbReference>
<dbReference type="InterPro" id="IPR002317">
    <property type="entry name" value="Ser-tRNA-ligase_type_1"/>
</dbReference>
<dbReference type="InterPro" id="IPR015866">
    <property type="entry name" value="Ser-tRNA-synth_1_N"/>
</dbReference>
<dbReference type="InterPro" id="IPR042103">
    <property type="entry name" value="SerRS_1_N_sf"/>
</dbReference>
<dbReference type="InterPro" id="IPR033729">
    <property type="entry name" value="SerRS_core"/>
</dbReference>
<dbReference type="InterPro" id="IPR010978">
    <property type="entry name" value="tRNA-bd_arm"/>
</dbReference>
<dbReference type="NCBIfam" id="TIGR00414">
    <property type="entry name" value="serS"/>
    <property type="match status" value="1"/>
</dbReference>
<dbReference type="PANTHER" id="PTHR43697:SF1">
    <property type="entry name" value="SERINE--TRNA LIGASE"/>
    <property type="match status" value="1"/>
</dbReference>
<dbReference type="PANTHER" id="PTHR43697">
    <property type="entry name" value="SERYL-TRNA SYNTHETASE"/>
    <property type="match status" value="1"/>
</dbReference>
<dbReference type="Pfam" id="PF02403">
    <property type="entry name" value="Seryl_tRNA_N"/>
    <property type="match status" value="1"/>
</dbReference>
<dbReference type="Pfam" id="PF00587">
    <property type="entry name" value="tRNA-synt_2b"/>
    <property type="match status" value="1"/>
</dbReference>
<dbReference type="PIRSF" id="PIRSF001529">
    <property type="entry name" value="Ser-tRNA-synth_IIa"/>
    <property type="match status" value="1"/>
</dbReference>
<dbReference type="PRINTS" id="PR00981">
    <property type="entry name" value="TRNASYNTHSER"/>
</dbReference>
<dbReference type="SUPFAM" id="SSF55681">
    <property type="entry name" value="Class II aaRS and biotin synthetases"/>
    <property type="match status" value="1"/>
</dbReference>
<dbReference type="SUPFAM" id="SSF46589">
    <property type="entry name" value="tRNA-binding arm"/>
    <property type="match status" value="1"/>
</dbReference>
<dbReference type="PROSITE" id="PS50862">
    <property type="entry name" value="AA_TRNA_LIGASE_II"/>
    <property type="match status" value="1"/>
</dbReference>
<protein>
    <recommendedName>
        <fullName evidence="1">Serine--tRNA ligase</fullName>
        <ecNumber evidence="1">6.1.1.11</ecNumber>
    </recommendedName>
    <alternativeName>
        <fullName evidence="1">Seryl-tRNA synthetase</fullName>
        <shortName evidence="1">SerRS</shortName>
    </alternativeName>
    <alternativeName>
        <fullName evidence="1">Seryl-tRNA(Ser/Sec) synthetase</fullName>
    </alternativeName>
</protein>
<name>SYS_PSYWF</name>
<gene>
    <name evidence="1" type="primary">serS</name>
    <name type="ordered locus">PsycPRwf_1539</name>
</gene>
<evidence type="ECO:0000255" key="1">
    <source>
        <dbReference type="HAMAP-Rule" id="MF_00176"/>
    </source>
</evidence>
<comment type="function">
    <text evidence="1">Catalyzes the attachment of serine to tRNA(Ser). Is also able to aminoacylate tRNA(Sec) with serine, to form the misacylated tRNA L-seryl-tRNA(Sec), which will be further converted into selenocysteinyl-tRNA(Sec).</text>
</comment>
<comment type="catalytic activity">
    <reaction evidence="1">
        <text>tRNA(Ser) + L-serine + ATP = L-seryl-tRNA(Ser) + AMP + diphosphate + H(+)</text>
        <dbReference type="Rhea" id="RHEA:12292"/>
        <dbReference type="Rhea" id="RHEA-COMP:9669"/>
        <dbReference type="Rhea" id="RHEA-COMP:9703"/>
        <dbReference type="ChEBI" id="CHEBI:15378"/>
        <dbReference type="ChEBI" id="CHEBI:30616"/>
        <dbReference type="ChEBI" id="CHEBI:33019"/>
        <dbReference type="ChEBI" id="CHEBI:33384"/>
        <dbReference type="ChEBI" id="CHEBI:78442"/>
        <dbReference type="ChEBI" id="CHEBI:78533"/>
        <dbReference type="ChEBI" id="CHEBI:456215"/>
        <dbReference type="EC" id="6.1.1.11"/>
    </reaction>
</comment>
<comment type="catalytic activity">
    <reaction evidence="1">
        <text>tRNA(Sec) + L-serine + ATP = L-seryl-tRNA(Sec) + AMP + diphosphate + H(+)</text>
        <dbReference type="Rhea" id="RHEA:42580"/>
        <dbReference type="Rhea" id="RHEA-COMP:9742"/>
        <dbReference type="Rhea" id="RHEA-COMP:10128"/>
        <dbReference type="ChEBI" id="CHEBI:15378"/>
        <dbReference type="ChEBI" id="CHEBI:30616"/>
        <dbReference type="ChEBI" id="CHEBI:33019"/>
        <dbReference type="ChEBI" id="CHEBI:33384"/>
        <dbReference type="ChEBI" id="CHEBI:78442"/>
        <dbReference type="ChEBI" id="CHEBI:78533"/>
        <dbReference type="ChEBI" id="CHEBI:456215"/>
        <dbReference type="EC" id="6.1.1.11"/>
    </reaction>
</comment>
<comment type="pathway">
    <text evidence="1">Aminoacyl-tRNA biosynthesis; selenocysteinyl-tRNA(Sec) biosynthesis; L-seryl-tRNA(Sec) from L-serine and tRNA(Sec): step 1/1.</text>
</comment>
<comment type="subunit">
    <text evidence="1">Homodimer. The tRNA molecule binds across the dimer.</text>
</comment>
<comment type="subcellular location">
    <subcellularLocation>
        <location evidence="1">Cytoplasm</location>
    </subcellularLocation>
</comment>
<comment type="domain">
    <text evidence="1">Consists of two distinct domains, a catalytic core and a N-terminal extension that is involved in tRNA binding.</text>
</comment>
<comment type="similarity">
    <text evidence="1">Belongs to the class-II aminoacyl-tRNA synthetase family. Type-1 seryl-tRNA synthetase subfamily.</text>
</comment>
<organism>
    <name type="scientific">Psychrobacter sp. (strain PRwf-1)</name>
    <dbReference type="NCBI Taxonomy" id="349106"/>
    <lineage>
        <taxon>Bacteria</taxon>
        <taxon>Pseudomonadati</taxon>
        <taxon>Pseudomonadota</taxon>
        <taxon>Gammaproteobacteria</taxon>
        <taxon>Moraxellales</taxon>
        <taxon>Moraxellaceae</taxon>
        <taxon>Psychrobacter</taxon>
    </lineage>
</organism>
<proteinExistence type="inferred from homology"/>